<gene>
    <name evidence="1" type="primary">fluC</name>
    <name evidence="1" type="synonym">crcB</name>
    <name type="ordered locus">Sputw3181_2004</name>
</gene>
<evidence type="ECO:0000255" key="1">
    <source>
        <dbReference type="HAMAP-Rule" id="MF_00454"/>
    </source>
</evidence>
<keyword id="KW-0997">Cell inner membrane</keyword>
<keyword id="KW-1003">Cell membrane</keyword>
<keyword id="KW-0407">Ion channel</keyword>
<keyword id="KW-0406">Ion transport</keyword>
<keyword id="KW-0472">Membrane</keyword>
<keyword id="KW-0479">Metal-binding</keyword>
<keyword id="KW-0915">Sodium</keyword>
<keyword id="KW-0812">Transmembrane</keyword>
<keyword id="KW-1133">Transmembrane helix</keyword>
<keyword id="KW-0813">Transport</keyword>
<accession>A1RJJ3</accession>
<name>FLUC_SHESW</name>
<comment type="function">
    <text evidence="1">Fluoride-specific ion channel. Important for reducing fluoride concentration in the cell, thus reducing its toxicity.</text>
</comment>
<comment type="catalytic activity">
    <reaction evidence="1">
        <text>fluoride(in) = fluoride(out)</text>
        <dbReference type="Rhea" id="RHEA:76159"/>
        <dbReference type="ChEBI" id="CHEBI:17051"/>
    </reaction>
    <physiologicalReaction direction="left-to-right" evidence="1">
        <dbReference type="Rhea" id="RHEA:76160"/>
    </physiologicalReaction>
</comment>
<comment type="activity regulation">
    <text evidence="1">Na(+) is not transported, but it plays an essential structural role and its presence is essential for fluoride channel function.</text>
</comment>
<comment type="subcellular location">
    <subcellularLocation>
        <location evidence="1">Cell inner membrane</location>
        <topology evidence="1">Multi-pass membrane protein</topology>
    </subcellularLocation>
</comment>
<comment type="similarity">
    <text evidence="1">Belongs to the fluoride channel Fluc/FEX (TC 1.A.43) family.</text>
</comment>
<sequence length="124" mass="13441">MTNVLLVALGGSIGAVFRYLISIFMIQVFGSSFPFGTLVVNVIGSFFMGVIYALGQMSHISPELKALIGVGLLGALTTFSTFSNETLLLLQEGDWLKAILNVVLNLSLCLFMVYLGQQLVFSRI</sequence>
<proteinExistence type="inferred from homology"/>
<dbReference type="EMBL" id="CP000503">
    <property type="protein sequence ID" value="ABM24838.1"/>
    <property type="molecule type" value="Genomic_DNA"/>
</dbReference>
<dbReference type="RefSeq" id="WP_011789326.1">
    <property type="nucleotide sequence ID" value="NC_008750.1"/>
</dbReference>
<dbReference type="SMR" id="A1RJJ3"/>
<dbReference type="GeneID" id="67443541"/>
<dbReference type="KEGG" id="shw:Sputw3181_2004"/>
<dbReference type="HOGENOM" id="CLU_114342_3_0_6"/>
<dbReference type="Proteomes" id="UP000002597">
    <property type="component" value="Chromosome"/>
</dbReference>
<dbReference type="GO" id="GO:0005886">
    <property type="term" value="C:plasma membrane"/>
    <property type="evidence" value="ECO:0007669"/>
    <property type="project" value="UniProtKB-SubCell"/>
</dbReference>
<dbReference type="GO" id="GO:0062054">
    <property type="term" value="F:fluoride channel activity"/>
    <property type="evidence" value="ECO:0007669"/>
    <property type="project" value="UniProtKB-UniRule"/>
</dbReference>
<dbReference type="GO" id="GO:0046872">
    <property type="term" value="F:metal ion binding"/>
    <property type="evidence" value="ECO:0007669"/>
    <property type="project" value="UniProtKB-KW"/>
</dbReference>
<dbReference type="GO" id="GO:0140114">
    <property type="term" value="P:cellular detoxification of fluoride"/>
    <property type="evidence" value="ECO:0007669"/>
    <property type="project" value="UniProtKB-UniRule"/>
</dbReference>
<dbReference type="HAMAP" id="MF_00454">
    <property type="entry name" value="FluC"/>
    <property type="match status" value="1"/>
</dbReference>
<dbReference type="InterPro" id="IPR003691">
    <property type="entry name" value="FluC"/>
</dbReference>
<dbReference type="NCBIfam" id="TIGR00494">
    <property type="entry name" value="crcB"/>
    <property type="match status" value="1"/>
</dbReference>
<dbReference type="PANTHER" id="PTHR28259">
    <property type="entry name" value="FLUORIDE EXPORT PROTEIN 1-RELATED"/>
    <property type="match status" value="1"/>
</dbReference>
<dbReference type="PANTHER" id="PTHR28259:SF1">
    <property type="entry name" value="FLUORIDE EXPORT PROTEIN 1-RELATED"/>
    <property type="match status" value="1"/>
</dbReference>
<dbReference type="Pfam" id="PF02537">
    <property type="entry name" value="CRCB"/>
    <property type="match status" value="1"/>
</dbReference>
<feature type="chain" id="PRO_1000026422" description="Fluoride-specific ion channel FluC">
    <location>
        <begin position="1"/>
        <end position="124"/>
    </location>
</feature>
<feature type="transmembrane region" description="Helical" evidence="1">
    <location>
        <begin position="4"/>
        <end position="24"/>
    </location>
</feature>
<feature type="transmembrane region" description="Helical" evidence="1">
    <location>
        <begin position="35"/>
        <end position="55"/>
    </location>
</feature>
<feature type="transmembrane region" description="Helical" evidence="1">
    <location>
        <begin position="60"/>
        <end position="80"/>
    </location>
</feature>
<feature type="transmembrane region" description="Helical" evidence="1">
    <location>
        <begin position="95"/>
        <end position="115"/>
    </location>
</feature>
<feature type="binding site" evidence="1">
    <location>
        <position position="74"/>
    </location>
    <ligand>
        <name>Na(+)</name>
        <dbReference type="ChEBI" id="CHEBI:29101"/>
        <note>structural</note>
    </ligand>
</feature>
<feature type="binding site" evidence="1">
    <location>
        <position position="77"/>
    </location>
    <ligand>
        <name>Na(+)</name>
        <dbReference type="ChEBI" id="CHEBI:29101"/>
        <note>structural</note>
    </ligand>
</feature>
<reference key="1">
    <citation type="submission" date="2006-12" db="EMBL/GenBank/DDBJ databases">
        <title>Complete sequence of Shewanella sp. W3-18-1.</title>
        <authorList>
            <consortium name="US DOE Joint Genome Institute"/>
            <person name="Copeland A."/>
            <person name="Lucas S."/>
            <person name="Lapidus A."/>
            <person name="Barry K."/>
            <person name="Detter J.C."/>
            <person name="Glavina del Rio T."/>
            <person name="Hammon N."/>
            <person name="Israni S."/>
            <person name="Dalin E."/>
            <person name="Tice H."/>
            <person name="Pitluck S."/>
            <person name="Chain P."/>
            <person name="Malfatti S."/>
            <person name="Shin M."/>
            <person name="Vergez L."/>
            <person name="Schmutz J."/>
            <person name="Larimer F."/>
            <person name="Land M."/>
            <person name="Hauser L."/>
            <person name="Kyrpides N."/>
            <person name="Lykidis A."/>
            <person name="Tiedje J."/>
            <person name="Richardson P."/>
        </authorList>
    </citation>
    <scope>NUCLEOTIDE SEQUENCE [LARGE SCALE GENOMIC DNA]</scope>
    <source>
        <strain>W3-18-1</strain>
    </source>
</reference>
<protein>
    <recommendedName>
        <fullName evidence="1">Fluoride-specific ion channel FluC</fullName>
    </recommendedName>
</protein>
<organism>
    <name type="scientific">Shewanella sp. (strain W3-18-1)</name>
    <dbReference type="NCBI Taxonomy" id="351745"/>
    <lineage>
        <taxon>Bacteria</taxon>
        <taxon>Pseudomonadati</taxon>
        <taxon>Pseudomonadota</taxon>
        <taxon>Gammaproteobacteria</taxon>
        <taxon>Alteromonadales</taxon>
        <taxon>Shewanellaceae</taxon>
        <taxon>Shewanella</taxon>
    </lineage>
</organism>